<evidence type="ECO:0000255" key="1">
    <source>
        <dbReference type="HAMAP-Rule" id="MF_00042"/>
    </source>
</evidence>
<evidence type="ECO:0000255" key="2">
    <source>
        <dbReference type="PROSITE-ProRule" id="PRU00408"/>
    </source>
</evidence>
<gene>
    <name evidence="1" type="primary">rnhA</name>
    <name type="ordered locus">CbuK_0513</name>
</gene>
<proteinExistence type="inferred from homology"/>
<name>RNH_COXB1</name>
<organism>
    <name type="scientific">Coxiella burnetii (strain CbuK_Q154)</name>
    <name type="common">Coxiella burnetii (strain Q154)</name>
    <dbReference type="NCBI Taxonomy" id="434924"/>
    <lineage>
        <taxon>Bacteria</taxon>
        <taxon>Pseudomonadati</taxon>
        <taxon>Pseudomonadota</taxon>
        <taxon>Gammaproteobacteria</taxon>
        <taxon>Legionellales</taxon>
        <taxon>Coxiellaceae</taxon>
        <taxon>Coxiella</taxon>
    </lineage>
</organism>
<comment type="function">
    <text evidence="1">Endonuclease that specifically degrades the RNA of RNA-DNA hybrids.</text>
</comment>
<comment type="catalytic activity">
    <reaction evidence="1">
        <text>Endonucleolytic cleavage to 5'-phosphomonoester.</text>
        <dbReference type="EC" id="3.1.26.4"/>
    </reaction>
</comment>
<comment type="cofactor">
    <cofactor evidence="1">
        <name>Mg(2+)</name>
        <dbReference type="ChEBI" id="CHEBI:18420"/>
    </cofactor>
    <text evidence="1">Binds 1 Mg(2+) ion per subunit. May bind a second metal ion at a regulatory site, or after substrate binding.</text>
</comment>
<comment type="subunit">
    <text evidence="1">Monomer.</text>
</comment>
<comment type="subcellular location">
    <subcellularLocation>
        <location evidence="1">Cytoplasm</location>
    </subcellularLocation>
</comment>
<comment type="similarity">
    <text evidence="1">Belongs to the RNase H family.</text>
</comment>
<dbReference type="EC" id="3.1.26.4" evidence="1"/>
<dbReference type="EMBL" id="CP001020">
    <property type="protein sequence ID" value="ACJ19793.1"/>
    <property type="molecule type" value="Genomic_DNA"/>
</dbReference>
<dbReference type="RefSeq" id="WP_005769237.1">
    <property type="nucleotide sequence ID" value="NC_011528.1"/>
</dbReference>
<dbReference type="SMR" id="B6J5V1"/>
<dbReference type="KEGG" id="cbc:CbuK_0513"/>
<dbReference type="HOGENOM" id="CLU_030894_6_0_6"/>
<dbReference type="GO" id="GO:0005737">
    <property type="term" value="C:cytoplasm"/>
    <property type="evidence" value="ECO:0007669"/>
    <property type="project" value="UniProtKB-SubCell"/>
</dbReference>
<dbReference type="GO" id="GO:0000287">
    <property type="term" value="F:magnesium ion binding"/>
    <property type="evidence" value="ECO:0007669"/>
    <property type="project" value="UniProtKB-UniRule"/>
</dbReference>
<dbReference type="GO" id="GO:0003676">
    <property type="term" value="F:nucleic acid binding"/>
    <property type="evidence" value="ECO:0007669"/>
    <property type="project" value="InterPro"/>
</dbReference>
<dbReference type="GO" id="GO:0004523">
    <property type="term" value="F:RNA-DNA hybrid ribonuclease activity"/>
    <property type="evidence" value="ECO:0007669"/>
    <property type="project" value="UniProtKB-UniRule"/>
</dbReference>
<dbReference type="GO" id="GO:0043137">
    <property type="term" value="P:DNA replication, removal of RNA primer"/>
    <property type="evidence" value="ECO:0007669"/>
    <property type="project" value="TreeGrafter"/>
</dbReference>
<dbReference type="CDD" id="cd09278">
    <property type="entry name" value="RNase_HI_prokaryote_like"/>
    <property type="match status" value="1"/>
</dbReference>
<dbReference type="FunFam" id="3.30.420.10:FF:000089">
    <property type="entry name" value="Ribonuclease H"/>
    <property type="match status" value="1"/>
</dbReference>
<dbReference type="Gene3D" id="3.30.420.10">
    <property type="entry name" value="Ribonuclease H-like superfamily/Ribonuclease H"/>
    <property type="match status" value="1"/>
</dbReference>
<dbReference type="HAMAP" id="MF_00042">
    <property type="entry name" value="RNase_H"/>
    <property type="match status" value="1"/>
</dbReference>
<dbReference type="InterPro" id="IPR050092">
    <property type="entry name" value="RNase_H"/>
</dbReference>
<dbReference type="InterPro" id="IPR012337">
    <property type="entry name" value="RNaseH-like_sf"/>
</dbReference>
<dbReference type="InterPro" id="IPR002156">
    <property type="entry name" value="RNaseH_domain"/>
</dbReference>
<dbReference type="InterPro" id="IPR036397">
    <property type="entry name" value="RNaseH_sf"/>
</dbReference>
<dbReference type="InterPro" id="IPR022892">
    <property type="entry name" value="RNaseHI"/>
</dbReference>
<dbReference type="NCBIfam" id="NF001236">
    <property type="entry name" value="PRK00203.1"/>
    <property type="match status" value="1"/>
</dbReference>
<dbReference type="PANTHER" id="PTHR10642">
    <property type="entry name" value="RIBONUCLEASE H1"/>
    <property type="match status" value="1"/>
</dbReference>
<dbReference type="PANTHER" id="PTHR10642:SF26">
    <property type="entry name" value="RIBONUCLEASE H1"/>
    <property type="match status" value="1"/>
</dbReference>
<dbReference type="Pfam" id="PF00075">
    <property type="entry name" value="RNase_H"/>
    <property type="match status" value="1"/>
</dbReference>
<dbReference type="SUPFAM" id="SSF53098">
    <property type="entry name" value="Ribonuclease H-like"/>
    <property type="match status" value="1"/>
</dbReference>
<dbReference type="PROSITE" id="PS50879">
    <property type="entry name" value="RNASE_H_1"/>
    <property type="match status" value="1"/>
</dbReference>
<keyword id="KW-0963">Cytoplasm</keyword>
<keyword id="KW-0255">Endonuclease</keyword>
<keyword id="KW-0378">Hydrolase</keyword>
<keyword id="KW-0460">Magnesium</keyword>
<keyword id="KW-0479">Metal-binding</keyword>
<keyword id="KW-0540">Nuclease</keyword>
<accession>B6J5V1</accession>
<feature type="chain" id="PRO_1000090896" description="Ribonuclease H">
    <location>
        <begin position="1"/>
        <end position="154"/>
    </location>
</feature>
<feature type="domain" description="RNase H type-1" evidence="2">
    <location>
        <begin position="5"/>
        <end position="146"/>
    </location>
</feature>
<feature type="binding site" evidence="1">
    <location>
        <position position="14"/>
    </location>
    <ligand>
        <name>Mg(2+)</name>
        <dbReference type="ChEBI" id="CHEBI:18420"/>
        <label>1</label>
    </ligand>
</feature>
<feature type="binding site" evidence="1">
    <location>
        <position position="14"/>
    </location>
    <ligand>
        <name>Mg(2+)</name>
        <dbReference type="ChEBI" id="CHEBI:18420"/>
        <label>2</label>
    </ligand>
</feature>
<feature type="binding site" evidence="1">
    <location>
        <position position="52"/>
    </location>
    <ligand>
        <name>Mg(2+)</name>
        <dbReference type="ChEBI" id="CHEBI:18420"/>
        <label>1</label>
    </ligand>
</feature>
<feature type="binding site" evidence="1">
    <location>
        <position position="74"/>
    </location>
    <ligand>
        <name>Mg(2+)</name>
        <dbReference type="ChEBI" id="CHEBI:18420"/>
        <label>1</label>
    </ligand>
</feature>
<feature type="binding site" evidence="1">
    <location>
        <position position="138"/>
    </location>
    <ligand>
        <name>Mg(2+)</name>
        <dbReference type="ChEBI" id="CHEBI:18420"/>
        <label>2</label>
    </ligand>
</feature>
<reference key="1">
    <citation type="journal article" date="2009" name="Infect. Immun.">
        <title>Comparative genomics reveal extensive transposon-mediated genomic plasticity and diversity among potential effector proteins within the genus Coxiella.</title>
        <authorList>
            <person name="Beare P.A."/>
            <person name="Unsworth N."/>
            <person name="Andoh M."/>
            <person name="Voth D.E."/>
            <person name="Omsland A."/>
            <person name="Gilk S.D."/>
            <person name="Williams K.P."/>
            <person name="Sobral B.W."/>
            <person name="Kupko J.J. III"/>
            <person name="Porcella S.F."/>
            <person name="Samuel J.E."/>
            <person name="Heinzen R.A."/>
        </authorList>
    </citation>
    <scope>NUCLEOTIDE SEQUENCE [LARGE SCALE GENOMIC DNA]</scope>
    <source>
        <strain>CbuK_Q154</strain>
    </source>
</reference>
<protein>
    <recommendedName>
        <fullName evidence="1">Ribonuclease H</fullName>
        <shortName evidence="1">RNase H</shortName>
        <ecNumber evidence="1">3.1.26.4</ecNumber>
    </recommendedName>
</protein>
<sequence>MAKQEQNIVYLYCDGACRGNPGPGGWGVLLRYNQHERQLHGGVANTTNNQMELTAAIEGLKSLKKPCQVVVTTDSQYLRRGITEWLPVWKRRGWRTSNKKPVKNQPLWETLEREVERHTIVWHWVKGHSGHAENEIADELANRGIDEVLKRGAR</sequence>